<accession>A7BJC4</accession>
<feature type="chain" id="PRO_0000352332" description="Malonate-semialdehyde dehydrogenase">
    <location>
        <begin position="1"/>
        <end position="487"/>
    </location>
</feature>
<feature type="active site" description="Nucleophile" evidence="1">
    <location>
        <position position="284"/>
    </location>
</feature>
<feature type="binding site" evidence="1">
    <location>
        <position position="150"/>
    </location>
    <ligand>
        <name>NAD(+)</name>
        <dbReference type="ChEBI" id="CHEBI:57540"/>
    </ligand>
</feature>
<feature type="binding site" evidence="1">
    <location>
        <position position="152"/>
    </location>
    <ligand>
        <name>NAD(+)</name>
        <dbReference type="ChEBI" id="CHEBI:57540"/>
    </ligand>
</feature>
<feature type="binding site" evidence="1">
    <location>
        <position position="176"/>
    </location>
    <ligand>
        <name>NAD(+)</name>
        <dbReference type="ChEBI" id="CHEBI:57540"/>
    </ligand>
</feature>
<feature type="binding site" evidence="1">
    <location>
        <position position="179"/>
    </location>
    <ligand>
        <name>NAD(+)</name>
        <dbReference type="ChEBI" id="CHEBI:57540"/>
    </ligand>
</feature>
<feature type="binding site" evidence="1">
    <location>
        <position position="180"/>
    </location>
    <ligand>
        <name>NAD(+)</name>
        <dbReference type="ChEBI" id="CHEBI:57540"/>
    </ligand>
</feature>
<feature type="binding site" evidence="1">
    <location>
        <position position="229"/>
    </location>
    <ligand>
        <name>NAD(+)</name>
        <dbReference type="ChEBI" id="CHEBI:57540"/>
    </ligand>
</feature>
<feature type="binding site" evidence="1">
    <location>
        <position position="251"/>
    </location>
    <ligand>
        <name>NAD(+)</name>
        <dbReference type="ChEBI" id="CHEBI:57540"/>
    </ligand>
</feature>
<feature type="binding site" evidence="1">
    <location>
        <position position="382"/>
    </location>
    <ligand>
        <name>NAD(+)</name>
        <dbReference type="ChEBI" id="CHEBI:57540"/>
    </ligand>
</feature>
<gene>
    <name evidence="1" type="primary">iolA</name>
</gene>
<sequence>MAEIRKLKNYINGEWVESKTDQYEDVVNPATKEVLCQVPISTKEDIDYAAQTAAEAFETWSKVAVPRRARILFNFQQLLSQHKEELAHLITIENGKNTKEALGEVGRGIENVEFAAGAPSLMMGDSLASIATDVEAANYRYPIGVVGGIAPFNFPMMVPCWMFPMAIALGNTFILKPSERTPLLTEKLVELFEKAGLPKGVFNVVYGAHDVVNGILEHPEIKAISFVGSKPVGEYVYKKGSEHLKRVQSLTGAKNHTIVLNDANLEDTVTNIVGAAFGSAGERCMACAVVTVEEGIADEFMAKLQEKVADIKIGNGLDDGVFLGPVIREDNKKRTLSYIEKGLEEGARLVCDGRENVSDDGYFVGPTIFDNVTTEMTIWKDEIFAPVLSVIRVKNLKEAIEIANKSEFANGACLFTSNSNAIRYFRENIDAGMLGINLGVPAPMAFFPFSGWKSSFFGTLHANGKDSVDFYTRKKVVTARFPAPDFN</sequence>
<keyword id="KW-0520">NAD</keyword>
<keyword id="KW-0560">Oxidoreductase</keyword>
<reference key="1">
    <citation type="journal article" date="2007" name="Biosci. Biotechnol. Biochem.">
        <title>Determination and characterization of IS4Bsu1-insertion loci and identification of a new insertion sequence element of the IS256 family in a natto starter.</title>
        <authorList>
            <person name="Kimura K."/>
            <person name="Itoh Y."/>
        </authorList>
    </citation>
    <scope>NUCLEOTIDE SEQUENCE [GENOMIC DNA]</scope>
    <source>
        <strain>Miyagino</strain>
    </source>
</reference>
<proteinExistence type="inferred from homology"/>
<name>IOLA_BACNA</name>
<organism>
    <name type="scientific">Bacillus subtilis subsp. natto</name>
    <dbReference type="NCBI Taxonomy" id="86029"/>
    <lineage>
        <taxon>Bacteria</taxon>
        <taxon>Bacillati</taxon>
        <taxon>Bacillota</taxon>
        <taxon>Bacilli</taxon>
        <taxon>Bacillales</taxon>
        <taxon>Bacillaceae</taxon>
        <taxon>Bacillus</taxon>
    </lineage>
</organism>
<protein>
    <recommendedName>
        <fullName evidence="1">Malonate-semialdehyde dehydrogenase</fullName>
        <shortName evidence="1">MSA dehydrogenase</shortName>
        <ecNumber evidence="1">1.2.1.27</ecNumber>
    </recommendedName>
    <alternativeName>
        <fullName evidence="1">Methylmalonate-semialdehyde dehydrogenase</fullName>
        <shortName evidence="1">MMSA dehydrogenase</shortName>
        <shortName evidence="1">MSDH</shortName>
    </alternativeName>
</protein>
<comment type="function">
    <text evidence="1">Catalyzes the oxidation of malonate semialdehyde (MSA) and methylmalonate semialdehyde (MMSA) into acetyl-CoA and propanoyl-CoA, respectively. Is involved in a myo-inositol catabolic pathway. Bicarbonate, and not CO2, is the end-product of the enzymatic reaction.</text>
</comment>
<comment type="catalytic activity">
    <reaction evidence="1">
        <text>3-oxopropanoate + NAD(+) + CoA + H2O = hydrogencarbonate + acetyl-CoA + NADH + H(+)</text>
        <dbReference type="Rhea" id="RHEA:76615"/>
        <dbReference type="ChEBI" id="CHEBI:15377"/>
        <dbReference type="ChEBI" id="CHEBI:15378"/>
        <dbReference type="ChEBI" id="CHEBI:17544"/>
        <dbReference type="ChEBI" id="CHEBI:33190"/>
        <dbReference type="ChEBI" id="CHEBI:57287"/>
        <dbReference type="ChEBI" id="CHEBI:57288"/>
        <dbReference type="ChEBI" id="CHEBI:57540"/>
        <dbReference type="ChEBI" id="CHEBI:57945"/>
        <dbReference type="EC" id="1.2.1.27"/>
    </reaction>
    <physiologicalReaction direction="left-to-right" evidence="1">
        <dbReference type="Rhea" id="RHEA:76616"/>
    </physiologicalReaction>
</comment>
<comment type="catalytic activity">
    <reaction evidence="1">
        <text>2-methyl-3-oxopropanoate + NAD(+) + CoA + H2O = propanoyl-CoA + hydrogencarbonate + NADH + H(+)</text>
        <dbReference type="Rhea" id="RHEA:20804"/>
        <dbReference type="ChEBI" id="CHEBI:15377"/>
        <dbReference type="ChEBI" id="CHEBI:15378"/>
        <dbReference type="ChEBI" id="CHEBI:17544"/>
        <dbReference type="ChEBI" id="CHEBI:57287"/>
        <dbReference type="ChEBI" id="CHEBI:57392"/>
        <dbReference type="ChEBI" id="CHEBI:57540"/>
        <dbReference type="ChEBI" id="CHEBI:57700"/>
        <dbReference type="ChEBI" id="CHEBI:57945"/>
        <dbReference type="EC" id="1.2.1.27"/>
    </reaction>
    <physiologicalReaction direction="left-to-right" evidence="1">
        <dbReference type="Rhea" id="RHEA:20805"/>
    </physiologicalReaction>
</comment>
<comment type="pathway">
    <text evidence="1">Polyol metabolism; myo-inositol degradation into acetyl-CoA; acetyl-CoA from myo-inositol: step 7/7.</text>
</comment>
<comment type="subunit">
    <text evidence="1">Homotetramer.</text>
</comment>
<comment type="similarity">
    <text evidence="1">Belongs to the aldehyde dehydrogenase family. IolA subfamily.</text>
</comment>
<comment type="sequence caution" evidence="2">
    <conflict type="erroneous initiation">
        <sequence resource="EMBL-CDS" id="BAF74776"/>
    </conflict>
</comment>
<dbReference type="EC" id="1.2.1.27" evidence="1"/>
<dbReference type="EMBL" id="AB304464">
    <property type="protein sequence ID" value="BAF74776.1"/>
    <property type="status" value="ALT_INIT"/>
    <property type="molecule type" value="Genomic_DNA"/>
</dbReference>
<dbReference type="RefSeq" id="WP_014481419.1">
    <property type="nucleotide sequence ID" value="NZ_SJSU01000040.1"/>
</dbReference>
<dbReference type="SMR" id="A7BJC4"/>
<dbReference type="UniPathway" id="UPA00076">
    <property type="reaction ID" value="UER00148"/>
</dbReference>
<dbReference type="GO" id="GO:0018478">
    <property type="term" value="F:malonate-semialdehyde dehydrogenase (acetylating) activity"/>
    <property type="evidence" value="ECO:0007669"/>
    <property type="project" value="UniProtKB-UniRule"/>
</dbReference>
<dbReference type="GO" id="GO:0004491">
    <property type="term" value="F:methylmalonate-semialdehyde dehydrogenase (acylating, NAD) activity"/>
    <property type="evidence" value="ECO:0007669"/>
    <property type="project" value="UniProtKB-UniRule"/>
</dbReference>
<dbReference type="GO" id="GO:0019310">
    <property type="term" value="P:inositol catabolic process"/>
    <property type="evidence" value="ECO:0007669"/>
    <property type="project" value="UniProtKB-UniRule"/>
</dbReference>
<dbReference type="GO" id="GO:0006210">
    <property type="term" value="P:thymine catabolic process"/>
    <property type="evidence" value="ECO:0007669"/>
    <property type="project" value="TreeGrafter"/>
</dbReference>
<dbReference type="GO" id="GO:0006574">
    <property type="term" value="P:valine catabolic process"/>
    <property type="evidence" value="ECO:0007669"/>
    <property type="project" value="TreeGrafter"/>
</dbReference>
<dbReference type="CDD" id="cd07085">
    <property type="entry name" value="ALDH_F6_MMSDH"/>
    <property type="match status" value="1"/>
</dbReference>
<dbReference type="FunFam" id="3.40.309.10:FF:000002">
    <property type="entry name" value="Methylmalonate-semialdehyde dehydrogenase (Acylating)"/>
    <property type="match status" value="1"/>
</dbReference>
<dbReference type="FunFam" id="3.40.605.10:FF:000003">
    <property type="entry name" value="Methylmalonate-semialdehyde dehydrogenase [acylating]"/>
    <property type="match status" value="1"/>
</dbReference>
<dbReference type="Gene3D" id="3.40.605.10">
    <property type="entry name" value="Aldehyde Dehydrogenase, Chain A, domain 1"/>
    <property type="match status" value="1"/>
</dbReference>
<dbReference type="Gene3D" id="3.40.309.10">
    <property type="entry name" value="Aldehyde Dehydrogenase, Chain A, domain 2"/>
    <property type="match status" value="1"/>
</dbReference>
<dbReference type="HAMAP" id="MF_01670">
    <property type="entry name" value="IolA"/>
    <property type="match status" value="1"/>
</dbReference>
<dbReference type="InterPro" id="IPR016161">
    <property type="entry name" value="Ald_DH/histidinol_DH"/>
</dbReference>
<dbReference type="InterPro" id="IPR016163">
    <property type="entry name" value="Ald_DH_C"/>
</dbReference>
<dbReference type="InterPro" id="IPR016160">
    <property type="entry name" value="Ald_DH_CS_CYS"/>
</dbReference>
<dbReference type="InterPro" id="IPR016162">
    <property type="entry name" value="Ald_DH_N"/>
</dbReference>
<dbReference type="InterPro" id="IPR015590">
    <property type="entry name" value="Aldehyde_DH_dom"/>
</dbReference>
<dbReference type="InterPro" id="IPR010061">
    <property type="entry name" value="MeMal-semiAld_DH"/>
</dbReference>
<dbReference type="InterPro" id="IPR023510">
    <property type="entry name" value="MSDH_GmP_bac"/>
</dbReference>
<dbReference type="NCBIfam" id="TIGR01722">
    <property type="entry name" value="MMSDH"/>
    <property type="match status" value="1"/>
</dbReference>
<dbReference type="PANTHER" id="PTHR43866">
    <property type="entry name" value="MALONATE-SEMIALDEHYDE DEHYDROGENASE"/>
    <property type="match status" value="1"/>
</dbReference>
<dbReference type="PANTHER" id="PTHR43866:SF4">
    <property type="entry name" value="MALONATE-SEMIALDEHYDE DEHYDROGENASE"/>
    <property type="match status" value="1"/>
</dbReference>
<dbReference type="Pfam" id="PF00171">
    <property type="entry name" value="Aldedh"/>
    <property type="match status" value="1"/>
</dbReference>
<dbReference type="SUPFAM" id="SSF53720">
    <property type="entry name" value="ALDH-like"/>
    <property type="match status" value="1"/>
</dbReference>
<dbReference type="PROSITE" id="PS00070">
    <property type="entry name" value="ALDEHYDE_DEHYDR_CYS"/>
    <property type="match status" value="1"/>
</dbReference>
<evidence type="ECO:0000255" key="1">
    <source>
        <dbReference type="HAMAP-Rule" id="MF_01670"/>
    </source>
</evidence>
<evidence type="ECO:0000305" key="2"/>